<proteinExistence type="evidence at transcript level"/>
<organism>
    <name type="scientific">Xenopus laevis</name>
    <name type="common">African clawed frog</name>
    <dbReference type="NCBI Taxonomy" id="8355"/>
    <lineage>
        <taxon>Eukaryota</taxon>
        <taxon>Metazoa</taxon>
        <taxon>Chordata</taxon>
        <taxon>Craniata</taxon>
        <taxon>Vertebrata</taxon>
        <taxon>Euteleostomi</taxon>
        <taxon>Amphibia</taxon>
        <taxon>Batrachia</taxon>
        <taxon>Anura</taxon>
        <taxon>Pipoidea</taxon>
        <taxon>Pipidae</taxon>
        <taxon>Xenopodinae</taxon>
        <taxon>Xenopus</taxon>
        <taxon>Xenopus</taxon>
    </lineage>
</organism>
<feature type="chain" id="PRO_0000341593" description="Zinc finger protein aebp2">
    <location>
        <begin position="1"/>
        <end position="358"/>
    </location>
</feature>
<feature type="zinc finger region" description="C2H2-type 1" evidence="2">
    <location>
        <begin position="108"/>
        <end position="133"/>
    </location>
</feature>
<feature type="zinc finger region" description="C2H2-type 2; degenerate" evidence="2">
    <location>
        <begin position="147"/>
        <end position="169"/>
    </location>
</feature>
<feature type="zinc finger region" description="C2H2-type 3" evidence="2">
    <location>
        <begin position="175"/>
        <end position="199"/>
    </location>
</feature>
<feature type="region of interest" description="Disordered" evidence="3">
    <location>
        <begin position="1"/>
        <end position="94"/>
    </location>
</feature>
<feature type="region of interest" description="Disordered" evidence="3">
    <location>
        <begin position="199"/>
        <end position="230"/>
    </location>
</feature>
<feature type="compositionally biased region" description="Low complexity" evidence="3">
    <location>
        <begin position="1"/>
        <end position="26"/>
    </location>
</feature>
<feature type="compositionally biased region" description="Low complexity" evidence="3">
    <location>
        <begin position="39"/>
        <end position="49"/>
    </location>
</feature>
<feature type="compositionally biased region" description="Polar residues" evidence="3">
    <location>
        <begin position="75"/>
        <end position="92"/>
    </location>
</feature>
<feature type="compositionally biased region" description="Polar residues" evidence="3">
    <location>
        <begin position="199"/>
        <end position="211"/>
    </location>
</feature>
<protein>
    <recommendedName>
        <fullName>Zinc finger protein aebp2</fullName>
    </recommendedName>
    <alternativeName>
        <fullName>Adipocyte enhancer-binding protein 2 homolog</fullName>
        <shortName>AE-binding protein 2 homolog</shortName>
    </alternativeName>
</protein>
<dbReference type="EMBL" id="BC071104">
    <property type="protein sequence ID" value="AAH71104.1"/>
    <property type="molecule type" value="mRNA"/>
</dbReference>
<dbReference type="RefSeq" id="NP_001085340.1">
    <property type="nucleotide sequence ID" value="NM_001091871.1"/>
</dbReference>
<dbReference type="SMR" id="Q6GR30"/>
<dbReference type="DNASU" id="443766"/>
<dbReference type="GeneID" id="443766"/>
<dbReference type="KEGG" id="xla:443766"/>
<dbReference type="AGR" id="Xenbase:XB-GENE-6251879"/>
<dbReference type="CTD" id="443766"/>
<dbReference type="Xenbase" id="XB-GENE-6251879">
    <property type="gene designation" value="aebp2.S"/>
</dbReference>
<dbReference type="OrthoDB" id="9984614at2759"/>
<dbReference type="Proteomes" id="UP000186698">
    <property type="component" value="Chromosome 3S"/>
</dbReference>
<dbReference type="Bgee" id="443766">
    <property type="expression patterns" value="Expressed in blastula and 19 other cell types or tissues"/>
</dbReference>
<dbReference type="GO" id="GO:0035098">
    <property type="term" value="C:ESC/E(Z) complex"/>
    <property type="evidence" value="ECO:0000250"/>
    <property type="project" value="UniProtKB"/>
</dbReference>
<dbReference type="GO" id="GO:0003677">
    <property type="term" value="F:DNA binding"/>
    <property type="evidence" value="ECO:0007669"/>
    <property type="project" value="UniProtKB-KW"/>
</dbReference>
<dbReference type="GO" id="GO:0008270">
    <property type="term" value="F:zinc ion binding"/>
    <property type="evidence" value="ECO:0007669"/>
    <property type="project" value="UniProtKB-KW"/>
</dbReference>
<dbReference type="GO" id="GO:0006325">
    <property type="term" value="P:chromatin organization"/>
    <property type="evidence" value="ECO:0007669"/>
    <property type="project" value="UniProtKB-KW"/>
</dbReference>
<dbReference type="GO" id="GO:0006357">
    <property type="term" value="P:regulation of transcription by RNA polymerase II"/>
    <property type="evidence" value="ECO:0000318"/>
    <property type="project" value="GO_Central"/>
</dbReference>
<dbReference type="FunFam" id="3.30.160.60:FF:000471">
    <property type="entry name" value="Zinc finger protein AEBP2"/>
    <property type="match status" value="1"/>
</dbReference>
<dbReference type="FunFam" id="3.30.160.60:FF:000323">
    <property type="entry name" value="zinc finger protein AEBP2"/>
    <property type="match status" value="1"/>
</dbReference>
<dbReference type="Gene3D" id="3.30.160.60">
    <property type="entry name" value="Classic Zinc Finger"/>
    <property type="match status" value="2"/>
</dbReference>
<dbReference type="InterPro" id="IPR052130">
    <property type="entry name" value="AEBP2/jing_C2H2-ZnF"/>
</dbReference>
<dbReference type="InterPro" id="IPR036236">
    <property type="entry name" value="Znf_C2H2_sf"/>
</dbReference>
<dbReference type="InterPro" id="IPR013087">
    <property type="entry name" value="Znf_C2H2_type"/>
</dbReference>
<dbReference type="PANTHER" id="PTHR46541">
    <property type="entry name" value="ZINC FINGER PROTEIN AEBP2"/>
    <property type="match status" value="1"/>
</dbReference>
<dbReference type="PANTHER" id="PTHR46541:SF1">
    <property type="entry name" value="ZINC FINGER PROTEIN AEBP2"/>
    <property type="match status" value="1"/>
</dbReference>
<dbReference type="SMART" id="SM00355">
    <property type="entry name" value="ZnF_C2H2"/>
    <property type="match status" value="3"/>
</dbReference>
<dbReference type="SUPFAM" id="SSF57667">
    <property type="entry name" value="beta-beta-alpha zinc fingers"/>
    <property type="match status" value="2"/>
</dbReference>
<dbReference type="PROSITE" id="PS00028">
    <property type="entry name" value="ZINC_FINGER_C2H2_1"/>
    <property type="match status" value="2"/>
</dbReference>
<dbReference type="PROSITE" id="PS50157">
    <property type="entry name" value="ZINC_FINGER_C2H2_2"/>
    <property type="match status" value="2"/>
</dbReference>
<name>AEBP2_XENLA</name>
<sequence length="358" mass="38967">MAAACECPEPSAPPAGSSAESEVPPAGEEEDEADDESSRSSGSGRESQGPEGGGGAGSLAVSEAEPLSRMDSEDSISSTLMDVDSTVSSGRSTPAMMNGGSANKNLSYSCCWDHCQTPFSCSPDLADHIRSIHVDGQHGGVYVCYWKGCKVYNTPSTSHSWLQRHMLTHSGDKPFKCVVGDCNASFASQGGLARHVPTHFSQQNSSKMANHSKSKEESPSKAGLNRKKKLKIKRKRALARPYDFFDAQTLDAIRHRAICFNLCAQIESLGNGHSVVFHSTVIAKRKEETGKIKLLLHWTPEDILPDVWVNESDRHQQKTKVVHLSKLPKDTALLLDPNIYRNSSKRNTHIGTLKEHLS</sequence>
<reference key="1">
    <citation type="submission" date="2004-05" db="EMBL/GenBank/DDBJ databases">
        <authorList>
            <consortium name="NIH - Xenopus Gene Collection (XGC) project"/>
        </authorList>
    </citation>
    <scope>NUCLEOTIDE SEQUENCE [LARGE SCALE MRNA]</scope>
    <source>
        <tissue>Embryo</tissue>
    </source>
</reference>
<gene>
    <name type="primary">aebp2</name>
</gene>
<keyword id="KW-0156">Chromatin regulator</keyword>
<keyword id="KW-0238">DNA-binding</keyword>
<keyword id="KW-0479">Metal-binding</keyword>
<keyword id="KW-0539">Nucleus</keyword>
<keyword id="KW-1185">Reference proteome</keyword>
<keyword id="KW-0677">Repeat</keyword>
<keyword id="KW-0678">Repressor</keyword>
<keyword id="KW-0804">Transcription</keyword>
<keyword id="KW-0805">Transcription regulation</keyword>
<keyword id="KW-0862">Zinc</keyword>
<keyword id="KW-0863">Zinc-finger</keyword>
<evidence type="ECO:0000250" key="1"/>
<evidence type="ECO:0000255" key="2">
    <source>
        <dbReference type="PROSITE-ProRule" id="PRU00042"/>
    </source>
</evidence>
<evidence type="ECO:0000256" key="3">
    <source>
        <dbReference type="SAM" id="MobiDB-lite"/>
    </source>
</evidence>
<evidence type="ECO:0000305" key="4"/>
<comment type="function">
    <text evidence="1">DNA-binding transcriptional repressor. May interact with and stimulate the activity of histone methyltransferase complexes.</text>
</comment>
<comment type="subcellular location">
    <subcellularLocation>
        <location evidence="4">Nucleus</location>
    </subcellularLocation>
</comment>
<comment type="similarity">
    <text evidence="4">Belongs to the AEBP2/jing C2H2-type zinc-finger family.</text>
</comment>
<accession>Q6GR30</accession>